<evidence type="ECO:0000255" key="1">
    <source>
        <dbReference type="HAMAP-Rule" id="MF_00184"/>
    </source>
</evidence>
<evidence type="ECO:0000255" key="2">
    <source>
        <dbReference type="PROSITE-ProRule" id="PRU01228"/>
    </source>
</evidence>
<evidence type="ECO:0000256" key="3">
    <source>
        <dbReference type="SAM" id="MobiDB-lite"/>
    </source>
</evidence>
<organism>
    <name type="scientific">Mycobacterium bovis (strain BCG / Pasteur 1173P2)</name>
    <dbReference type="NCBI Taxonomy" id="410289"/>
    <lineage>
        <taxon>Bacteria</taxon>
        <taxon>Bacillati</taxon>
        <taxon>Actinomycetota</taxon>
        <taxon>Actinomycetes</taxon>
        <taxon>Mycobacteriales</taxon>
        <taxon>Mycobacteriaceae</taxon>
        <taxon>Mycobacterium</taxon>
        <taxon>Mycobacterium tuberculosis complex</taxon>
    </lineage>
</organism>
<gene>
    <name evidence="1" type="primary">thrS</name>
    <name type="ordered locus">BCG_2639c</name>
</gene>
<feature type="chain" id="PRO_1000020439" description="Threonine--tRNA ligase">
    <location>
        <begin position="1"/>
        <end position="692"/>
    </location>
</feature>
<feature type="domain" description="TGS" evidence="2">
    <location>
        <begin position="1"/>
        <end position="74"/>
    </location>
</feature>
<feature type="region of interest" description="Disordered" evidence="3">
    <location>
        <begin position="1"/>
        <end position="20"/>
    </location>
</feature>
<feature type="region of interest" description="Catalytic" evidence="1">
    <location>
        <begin position="269"/>
        <end position="575"/>
    </location>
</feature>
<feature type="binding site" evidence="1">
    <location>
        <position position="374"/>
    </location>
    <ligand>
        <name>Zn(2+)</name>
        <dbReference type="ChEBI" id="CHEBI:29105"/>
    </ligand>
</feature>
<feature type="binding site" evidence="1">
    <location>
        <position position="425"/>
    </location>
    <ligand>
        <name>Zn(2+)</name>
        <dbReference type="ChEBI" id="CHEBI:29105"/>
    </ligand>
</feature>
<feature type="binding site" evidence="1">
    <location>
        <position position="552"/>
    </location>
    <ligand>
        <name>Zn(2+)</name>
        <dbReference type="ChEBI" id="CHEBI:29105"/>
    </ligand>
</feature>
<dbReference type="EC" id="6.1.1.3" evidence="1"/>
<dbReference type="EMBL" id="AM408590">
    <property type="protein sequence ID" value="CAL72627.1"/>
    <property type="molecule type" value="Genomic_DNA"/>
</dbReference>
<dbReference type="RefSeq" id="WP_003413486.1">
    <property type="nucleotide sequence ID" value="NC_008769.1"/>
</dbReference>
<dbReference type="SMR" id="A1KLW4"/>
<dbReference type="KEGG" id="mbb:BCG_2639c"/>
<dbReference type="HOGENOM" id="CLU_008554_0_1_11"/>
<dbReference type="Proteomes" id="UP000001472">
    <property type="component" value="Chromosome"/>
</dbReference>
<dbReference type="GO" id="GO:0005737">
    <property type="term" value="C:cytoplasm"/>
    <property type="evidence" value="ECO:0007669"/>
    <property type="project" value="UniProtKB-SubCell"/>
</dbReference>
<dbReference type="GO" id="GO:0005524">
    <property type="term" value="F:ATP binding"/>
    <property type="evidence" value="ECO:0007669"/>
    <property type="project" value="UniProtKB-UniRule"/>
</dbReference>
<dbReference type="GO" id="GO:0046872">
    <property type="term" value="F:metal ion binding"/>
    <property type="evidence" value="ECO:0007669"/>
    <property type="project" value="UniProtKB-KW"/>
</dbReference>
<dbReference type="GO" id="GO:0004829">
    <property type="term" value="F:threonine-tRNA ligase activity"/>
    <property type="evidence" value="ECO:0007669"/>
    <property type="project" value="UniProtKB-UniRule"/>
</dbReference>
<dbReference type="GO" id="GO:0000049">
    <property type="term" value="F:tRNA binding"/>
    <property type="evidence" value="ECO:0007669"/>
    <property type="project" value="UniProtKB-KW"/>
</dbReference>
<dbReference type="GO" id="GO:0006435">
    <property type="term" value="P:threonyl-tRNA aminoacylation"/>
    <property type="evidence" value="ECO:0007669"/>
    <property type="project" value="UniProtKB-UniRule"/>
</dbReference>
<dbReference type="CDD" id="cd00860">
    <property type="entry name" value="ThrRS_anticodon"/>
    <property type="match status" value="1"/>
</dbReference>
<dbReference type="CDD" id="cd00771">
    <property type="entry name" value="ThrRS_core"/>
    <property type="match status" value="1"/>
</dbReference>
<dbReference type="FunFam" id="3.30.54.20:FF:000003">
    <property type="entry name" value="Threonine--tRNA ligase"/>
    <property type="match status" value="1"/>
</dbReference>
<dbReference type="FunFam" id="3.30.930.10:FF:000019">
    <property type="entry name" value="Threonine--tRNA ligase"/>
    <property type="match status" value="1"/>
</dbReference>
<dbReference type="FunFam" id="3.40.50.800:FF:000001">
    <property type="entry name" value="Threonine--tRNA ligase"/>
    <property type="match status" value="1"/>
</dbReference>
<dbReference type="FunFam" id="3.30.980.10:FF:000005">
    <property type="entry name" value="Threonyl-tRNA synthetase, mitochondrial"/>
    <property type="match status" value="1"/>
</dbReference>
<dbReference type="Gene3D" id="3.30.54.20">
    <property type="match status" value="1"/>
</dbReference>
<dbReference type="Gene3D" id="3.40.50.800">
    <property type="entry name" value="Anticodon-binding domain"/>
    <property type="match status" value="1"/>
</dbReference>
<dbReference type="Gene3D" id="3.30.930.10">
    <property type="entry name" value="Bira Bifunctional Protein, Domain 2"/>
    <property type="match status" value="1"/>
</dbReference>
<dbReference type="Gene3D" id="3.30.980.10">
    <property type="entry name" value="Threonyl-trna Synthetase, Chain A, domain 2"/>
    <property type="match status" value="1"/>
</dbReference>
<dbReference type="HAMAP" id="MF_00184">
    <property type="entry name" value="Thr_tRNA_synth"/>
    <property type="match status" value="1"/>
</dbReference>
<dbReference type="InterPro" id="IPR002314">
    <property type="entry name" value="aa-tRNA-synt_IIb"/>
</dbReference>
<dbReference type="InterPro" id="IPR006195">
    <property type="entry name" value="aa-tRNA-synth_II"/>
</dbReference>
<dbReference type="InterPro" id="IPR045864">
    <property type="entry name" value="aa-tRNA-synth_II/BPL/LPL"/>
</dbReference>
<dbReference type="InterPro" id="IPR004154">
    <property type="entry name" value="Anticodon-bd"/>
</dbReference>
<dbReference type="InterPro" id="IPR036621">
    <property type="entry name" value="Anticodon-bd_dom_sf"/>
</dbReference>
<dbReference type="InterPro" id="IPR004095">
    <property type="entry name" value="TGS"/>
</dbReference>
<dbReference type="InterPro" id="IPR002320">
    <property type="entry name" value="Thr-tRNA-ligase_IIa"/>
</dbReference>
<dbReference type="InterPro" id="IPR018163">
    <property type="entry name" value="Thr/Ala-tRNA-synth_IIc_edit"/>
</dbReference>
<dbReference type="InterPro" id="IPR047246">
    <property type="entry name" value="ThrRS_anticodon"/>
</dbReference>
<dbReference type="InterPro" id="IPR033728">
    <property type="entry name" value="ThrRS_core"/>
</dbReference>
<dbReference type="InterPro" id="IPR012947">
    <property type="entry name" value="tRNA_SAD"/>
</dbReference>
<dbReference type="NCBIfam" id="TIGR00418">
    <property type="entry name" value="thrS"/>
    <property type="match status" value="1"/>
</dbReference>
<dbReference type="PANTHER" id="PTHR11451:SF44">
    <property type="entry name" value="THREONINE--TRNA LIGASE, CHLOROPLASTIC_MITOCHONDRIAL 2"/>
    <property type="match status" value="1"/>
</dbReference>
<dbReference type="PANTHER" id="PTHR11451">
    <property type="entry name" value="THREONINE-TRNA LIGASE"/>
    <property type="match status" value="1"/>
</dbReference>
<dbReference type="Pfam" id="PF03129">
    <property type="entry name" value="HGTP_anticodon"/>
    <property type="match status" value="1"/>
</dbReference>
<dbReference type="Pfam" id="PF00587">
    <property type="entry name" value="tRNA-synt_2b"/>
    <property type="match status" value="1"/>
</dbReference>
<dbReference type="Pfam" id="PF07973">
    <property type="entry name" value="tRNA_SAD"/>
    <property type="match status" value="1"/>
</dbReference>
<dbReference type="PRINTS" id="PR01047">
    <property type="entry name" value="TRNASYNTHTHR"/>
</dbReference>
<dbReference type="SMART" id="SM00863">
    <property type="entry name" value="tRNA_SAD"/>
    <property type="match status" value="1"/>
</dbReference>
<dbReference type="SUPFAM" id="SSF52954">
    <property type="entry name" value="Class II aaRS ABD-related"/>
    <property type="match status" value="1"/>
</dbReference>
<dbReference type="SUPFAM" id="SSF55681">
    <property type="entry name" value="Class II aaRS and biotin synthetases"/>
    <property type="match status" value="1"/>
</dbReference>
<dbReference type="SUPFAM" id="SSF55186">
    <property type="entry name" value="ThrRS/AlaRS common domain"/>
    <property type="match status" value="1"/>
</dbReference>
<dbReference type="PROSITE" id="PS50862">
    <property type="entry name" value="AA_TRNA_LIGASE_II"/>
    <property type="match status" value="1"/>
</dbReference>
<dbReference type="PROSITE" id="PS51880">
    <property type="entry name" value="TGS"/>
    <property type="match status" value="1"/>
</dbReference>
<protein>
    <recommendedName>
        <fullName evidence="1">Threonine--tRNA ligase</fullName>
        <ecNumber evidence="1">6.1.1.3</ecNumber>
    </recommendedName>
    <alternativeName>
        <fullName evidence="1">Threonyl-tRNA synthetase</fullName>
        <shortName evidence="1">ThrRS</shortName>
    </alternativeName>
</protein>
<name>SYT_MYCBP</name>
<comment type="function">
    <text evidence="1">Catalyzes the attachment of threonine to tRNA(Thr) in a two-step reaction: L-threonine is first activated by ATP to form Thr-AMP and then transferred to the acceptor end of tRNA(Thr). Also edits incorrectly charged L-seryl-tRNA(Thr).</text>
</comment>
<comment type="catalytic activity">
    <reaction evidence="1">
        <text>tRNA(Thr) + L-threonine + ATP = L-threonyl-tRNA(Thr) + AMP + diphosphate + H(+)</text>
        <dbReference type="Rhea" id="RHEA:24624"/>
        <dbReference type="Rhea" id="RHEA-COMP:9670"/>
        <dbReference type="Rhea" id="RHEA-COMP:9704"/>
        <dbReference type="ChEBI" id="CHEBI:15378"/>
        <dbReference type="ChEBI" id="CHEBI:30616"/>
        <dbReference type="ChEBI" id="CHEBI:33019"/>
        <dbReference type="ChEBI" id="CHEBI:57926"/>
        <dbReference type="ChEBI" id="CHEBI:78442"/>
        <dbReference type="ChEBI" id="CHEBI:78534"/>
        <dbReference type="ChEBI" id="CHEBI:456215"/>
        <dbReference type="EC" id="6.1.1.3"/>
    </reaction>
</comment>
<comment type="cofactor">
    <cofactor evidence="1">
        <name>Zn(2+)</name>
        <dbReference type="ChEBI" id="CHEBI:29105"/>
    </cofactor>
    <text evidence="1">Binds 1 zinc ion per subunit.</text>
</comment>
<comment type="subunit">
    <text evidence="1">Homodimer.</text>
</comment>
<comment type="subcellular location">
    <subcellularLocation>
        <location evidence="1">Cytoplasm</location>
    </subcellularLocation>
</comment>
<comment type="similarity">
    <text evidence="1">Belongs to the class-II aminoacyl-tRNA synthetase family.</text>
</comment>
<reference key="1">
    <citation type="journal article" date="2007" name="Proc. Natl. Acad. Sci. U.S.A.">
        <title>Genome plasticity of BCG and impact on vaccine efficacy.</title>
        <authorList>
            <person name="Brosch R."/>
            <person name="Gordon S.V."/>
            <person name="Garnier T."/>
            <person name="Eiglmeier K."/>
            <person name="Frigui W."/>
            <person name="Valenti P."/>
            <person name="Dos Santos S."/>
            <person name="Duthoy S."/>
            <person name="Lacroix C."/>
            <person name="Garcia-Pelayo C."/>
            <person name="Inwald J.K."/>
            <person name="Golby P."/>
            <person name="Garcia J.N."/>
            <person name="Hewinson R.G."/>
            <person name="Behr M.A."/>
            <person name="Quail M.A."/>
            <person name="Churcher C."/>
            <person name="Barrell B.G."/>
            <person name="Parkhill J."/>
            <person name="Cole S.T."/>
        </authorList>
    </citation>
    <scope>NUCLEOTIDE SEQUENCE [LARGE SCALE GENOMIC DNA]</scope>
    <source>
        <strain>BCG / Pasteur 1173P2</strain>
    </source>
</reference>
<proteinExistence type="inferred from homology"/>
<accession>A1KLW4</accession>
<sequence length="692" mass="77122">MSAPAQPAPGVDGGDPSQARIRVPAGTTAATAVGEAGLPRRGTPDAIVVVRDADGNLRDLSWVPDVDTDITPVAANTDDGRSVIRHSTAHVLAQAVQELFPQAKLGIGPPITDGFYYDFDVPEPFTPEDLAALEKRMRQIVKEGQLFDRRVYESTEQARAELANEPYKLELVDDKSGDAEIMEVGGDELTAYDNLNPRTRERVWGDLCRGPHIPTTKHIPAFKLTRSSAAYWRGDQKNASLQRIYGTAWESQEALDRHLEFIEEAQRRDHRKLGVELDLFSFPDEIGSGLAVFHPKGGIVRRELEDYSRRKHTEAGYQFVNSPHITKAQLFHTSGHLDWYADGMFPPMHIDAEYNADGSLRKPGQDYYLKPMNCPMHCLIFRARGRSYRELPLRLFEFGTVYRYEKSGVVHGLTRVRGLTMDDAHIFCTRDQMRDELRSLLRFVLDLLADYGLTDFYLELSTKDPEKFVGAEEVWEEATTVLAEVGAESGLELVPDPGGAAFYGPKISVQVKDALGRTWQMSTIQLDFNFPERFGLEYTAADGTRHRPVMIHRALFGSIERFFGILTEHYAGAFPAWLAPVQVVGIPVADEHVAYLEEVATQLKSHGVRAEVDASDDRMAKKIVHHTNHKVPFMVLAGDRDVAAGAVSFRFGDRTQINGVARDDAVAAIVAWIADRENAVPTAELVKVAGRE</sequence>
<keyword id="KW-0030">Aminoacyl-tRNA synthetase</keyword>
<keyword id="KW-0067">ATP-binding</keyword>
<keyword id="KW-0963">Cytoplasm</keyword>
<keyword id="KW-0436">Ligase</keyword>
<keyword id="KW-0479">Metal-binding</keyword>
<keyword id="KW-0547">Nucleotide-binding</keyword>
<keyword id="KW-0648">Protein biosynthesis</keyword>
<keyword id="KW-0694">RNA-binding</keyword>
<keyword id="KW-0820">tRNA-binding</keyword>
<keyword id="KW-0862">Zinc</keyword>